<evidence type="ECO:0000255" key="1">
    <source>
        <dbReference type="HAMAP-Rule" id="MF_00537"/>
    </source>
</evidence>
<evidence type="ECO:0000305" key="2"/>
<feature type="chain" id="PRO_1000128369" description="Small ribosomal subunit protein uS14">
    <location>
        <begin position="1"/>
        <end position="101"/>
    </location>
</feature>
<reference key="1">
    <citation type="journal article" date="2003" name="Genome Res.">
        <title>Comparative complete genome sequence analysis of the amino acid replacements responsible for the thermostability of Corynebacterium efficiens.</title>
        <authorList>
            <person name="Nishio Y."/>
            <person name="Nakamura Y."/>
            <person name="Kawarabayasi Y."/>
            <person name="Usuda Y."/>
            <person name="Kimura E."/>
            <person name="Sugimoto S."/>
            <person name="Matsui K."/>
            <person name="Yamagishi A."/>
            <person name="Kikuchi H."/>
            <person name="Ikeo K."/>
            <person name="Gojobori T."/>
        </authorList>
    </citation>
    <scope>NUCLEOTIDE SEQUENCE [LARGE SCALE GENOMIC DNA]</scope>
    <source>
        <strain>DSM 44549 / YS-314 / AJ 12310 / JCM 11189 / NBRC 100395</strain>
    </source>
</reference>
<dbReference type="EMBL" id="BA000035">
    <property type="protein sequence ID" value="BAC17751.1"/>
    <property type="molecule type" value="Genomic_DNA"/>
</dbReference>
<dbReference type="RefSeq" id="WP_006770094.1">
    <property type="nucleotide sequence ID" value="NZ_GG700688.1"/>
</dbReference>
<dbReference type="SMR" id="Q8FR26"/>
<dbReference type="STRING" id="196164.gene:10741347"/>
<dbReference type="KEGG" id="cef:CE0941"/>
<dbReference type="eggNOG" id="COG0199">
    <property type="taxonomic scope" value="Bacteria"/>
</dbReference>
<dbReference type="HOGENOM" id="CLU_139869_0_1_11"/>
<dbReference type="OrthoDB" id="9810484at2"/>
<dbReference type="Proteomes" id="UP000001409">
    <property type="component" value="Chromosome"/>
</dbReference>
<dbReference type="GO" id="GO:0015935">
    <property type="term" value="C:small ribosomal subunit"/>
    <property type="evidence" value="ECO:0007669"/>
    <property type="project" value="TreeGrafter"/>
</dbReference>
<dbReference type="GO" id="GO:0019843">
    <property type="term" value="F:rRNA binding"/>
    <property type="evidence" value="ECO:0007669"/>
    <property type="project" value="UniProtKB-UniRule"/>
</dbReference>
<dbReference type="GO" id="GO:0003735">
    <property type="term" value="F:structural constituent of ribosome"/>
    <property type="evidence" value="ECO:0007669"/>
    <property type="project" value="InterPro"/>
</dbReference>
<dbReference type="GO" id="GO:0006412">
    <property type="term" value="P:translation"/>
    <property type="evidence" value="ECO:0007669"/>
    <property type="project" value="UniProtKB-UniRule"/>
</dbReference>
<dbReference type="FunFam" id="1.10.287.1480:FF:000001">
    <property type="entry name" value="30S ribosomal protein S14"/>
    <property type="match status" value="1"/>
</dbReference>
<dbReference type="Gene3D" id="1.10.287.1480">
    <property type="match status" value="1"/>
</dbReference>
<dbReference type="HAMAP" id="MF_00537">
    <property type="entry name" value="Ribosomal_uS14_1"/>
    <property type="match status" value="1"/>
</dbReference>
<dbReference type="InterPro" id="IPR001209">
    <property type="entry name" value="Ribosomal_uS14"/>
</dbReference>
<dbReference type="InterPro" id="IPR023036">
    <property type="entry name" value="Ribosomal_uS14_bac/plastid"/>
</dbReference>
<dbReference type="NCBIfam" id="NF006477">
    <property type="entry name" value="PRK08881.1"/>
    <property type="match status" value="1"/>
</dbReference>
<dbReference type="PANTHER" id="PTHR19836">
    <property type="entry name" value="30S RIBOSOMAL PROTEIN S14"/>
    <property type="match status" value="1"/>
</dbReference>
<dbReference type="PANTHER" id="PTHR19836:SF23">
    <property type="entry name" value="SMALL RIBOSOMAL SUBUNIT PROTEIN US14A"/>
    <property type="match status" value="1"/>
</dbReference>
<dbReference type="Pfam" id="PF00253">
    <property type="entry name" value="Ribosomal_S14"/>
    <property type="match status" value="1"/>
</dbReference>
<dbReference type="SUPFAM" id="SSF57716">
    <property type="entry name" value="Glucocorticoid receptor-like (DNA-binding domain)"/>
    <property type="match status" value="1"/>
</dbReference>
<protein>
    <recommendedName>
        <fullName evidence="1">Small ribosomal subunit protein uS14</fullName>
    </recommendedName>
    <alternativeName>
        <fullName evidence="2">30S ribosomal protein S14</fullName>
    </alternativeName>
</protein>
<gene>
    <name evidence="1" type="primary">rpsN</name>
    <name type="ordered locus">CE0941</name>
</gene>
<proteinExistence type="inferred from homology"/>
<accession>Q8FR26</accession>
<sequence length="101" mass="11854">MAKKSKIAKNEQRKAIVARYAERRAELKAIIRNPNTSDEDRLDAQFELNRQPRDAAQVRVRNRDAHDGRPRGYLRKFGLSRVRMREMAHRGELPGVRKSSW</sequence>
<keyword id="KW-1185">Reference proteome</keyword>
<keyword id="KW-0687">Ribonucleoprotein</keyword>
<keyword id="KW-0689">Ribosomal protein</keyword>
<keyword id="KW-0694">RNA-binding</keyword>
<keyword id="KW-0699">rRNA-binding</keyword>
<organism>
    <name type="scientific">Corynebacterium efficiens (strain DSM 44549 / YS-314 / AJ 12310 / JCM 11189 / NBRC 100395)</name>
    <dbReference type="NCBI Taxonomy" id="196164"/>
    <lineage>
        <taxon>Bacteria</taxon>
        <taxon>Bacillati</taxon>
        <taxon>Actinomycetota</taxon>
        <taxon>Actinomycetes</taxon>
        <taxon>Mycobacteriales</taxon>
        <taxon>Corynebacteriaceae</taxon>
        <taxon>Corynebacterium</taxon>
    </lineage>
</organism>
<comment type="function">
    <text evidence="1">Binds 16S rRNA, required for the assembly of 30S particles and may also be responsible for determining the conformation of the 16S rRNA at the A site.</text>
</comment>
<comment type="subunit">
    <text evidence="1">Part of the 30S ribosomal subunit. Contacts proteins S3 and S10.</text>
</comment>
<comment type="similarity">
    <text evidence="1">Belongs to the universal ribosomal protein uS14 family.</text>
</comment>
<name>RS14_COREF</name>